<evidence type="ECO:0000255" key="1">
    <source>
        <dbReference type="HAMAP-Rule" id="MF_01346"/>
    </source>
</evidence>
<comment type="function">
    <text evidence="1">Produces ATP from ADP in the presence of a proton gradient across the membrane. The alpha chain is a regulatory subunit.</text>
</comment>
<comment type="catalytic activity">
    <reaction evidence="1">
        <text>ATP + H2O + 4 H(+)(in) = ADP + phosphate + 5 H(+)(out)</text>
        <dbReference type="Rhea" id="RHEA:57720"/>
        <dbReference type="ChEBI" id="CHEBI:15377"/>
        <dbReference type="ChEBI" id="CHEBI:15378"/>
        <dbReference type="ChEBI" id="CHEBI:30616"/>
        <dbReference type="ChEBI" id="CHEBI:43474"/>
        <dbReference type="ChEBI" id="CHEBI:456216"/>
        <dbReference type="EC" id="7.1.2.2"/>
    </reaction>
</comment>
<comment type="subunit">
    <text evidence="1">F-type ATPases have 2 components, CF(1) - the catalytic core - and CF(0) - the membrane proton channel. CF(1) has five subunits: alpha(3), beta(3), gamma(1), delta(1), epsilon(1). CF(0) has three main subunits: a(1), b(2) and c(9-12). The alpha and beta chains form an alternating ring which encloses part of the gamma chain. CF(1) is attached to CF(0) by a central stalk formed by the gamma and epsilon chains, while a peripheral stalk is formed by the delta and b chains.</text>
</comment>
<comment type="subcellular location">
    <subcellularLocation>
        <location evidence="1">Cell inner membrane</location>
        <topology evidence="1">Peripheral membrane protein</topology>
    </subcellularLocation>
</comment>
<comment type="similarity">
    <text evidence="1">Belongs to the ATPase alpha/beta chains family.</text>
</comment>
<reference key="1">
    <citation type="journal article" date="2003" name="Nat. Genet.">
        <title>Comparative analysis of the genome sequences of Bordetella pertussis, Bordetella parapertussis and Bordetella bronchiseptica.</title>
        <authorList>
            <person name="Parkhill J."/>
            <person name="Sebaihia M."/>
            <person name="Preston A."/>
            <person name="Murphy L.D."/>
            <person name="Thomson N.R."/>
            <person name="Harris D.E."/>
            <person name="Holden M.T.G."/>
            <person name="Churcher C.M."/>
            <person name="Bentley S.D."/>
            <person name="Mungall K.L."/>
            <person name="Cerdeno-Tarraga A.-M."/>
            <person name="Temple L."/>
            <person name="James K.D."/>
            <person name="Harris B."/>
            <person name="Quail M.A."/>
            <person name="Achtman M."/>
            <person name="Atkin R."/>
            <person name="Baker S."/>
            <person name="Basham D."/>
            <person name="Bason N."/>
            <person name="Cherevach I."/>
            <person name="Chillingworth T."/>
            <person name="Collins M."/>
            <person name="Cronin A."/>
            <person name="Davis P."/>
            <person name="Doggett J."/>
            <person name="Feltwell T."/>
            <person name="Goble A."/>
            <person name="Hamlin N."/>
            <person name="Hauser H."/>
            <person name="Holroyd S."/>
            <person name="Jagels K."/>
            <person name="Leather S."/>
            <person name="Moule S."/>
            <person name="Norberczak H."/>
            <person name="O'Neil S."/>
            <person name="Ormond D."/>
            <person name="Price C."/>
            <person name="Rabbinowitsch E."/>
            <person name="Rutter S."/>
            <person name="Sanders M."/>
            <person name="Saunders D."/>
            <person name="Seeger K."/>
            <person name="Sharp S."/>
            <person name="Simmonds M."/>
            <person name="Skelton J."/>
            <person name="Squares R."/>
            <person name="Squares S."/>
            <person name="Stevens K."/>
            <person name="Unwin L."/>
            <person name="Whitehead S."/>
            <person name="Barrell B.G."/>
            <person name="Maskell D.J."/>
        </authorList>
    </citation>
    <scope>NUCLEOTIDE SEQUENCE [LARGE SCALE GENOMIC DNA]</scope>
    <source>
        <strain>ATCC BAA-588 / NCTC 13252 / RB50</strain>
    </source>
</reference>
<keyword id="KW-0066">ATP synthesis</keyword>
<keyword id="KW-0067">ATP-binding</keyword>
<keyword id="KW-0997">Cell inner membrane</keyword>
<keyword id="KW-1003">Cell membrane</keyword>
<keyword id="KW-0139">CF(1)</keyword>
<keyword id="KW-0375">Hydrogen ion transport</keyword>
<keyword id="KW-0406">Ion transport</keyword>
<keyword id="KW-0472">Membrane</keyword>
<keyword id="KW-0547">Nucleotide-binding</keyword>
<keyword id="KW-1278">Translocase</keyword>
<keyword id="KW-0813">Transport</keyword>
<proteinExistence type="inferred from homology"/>
<protein>
    <recommendedName>
        <fullName evidence="1">ATP synthase subunit alpha</fullName>
        <ecNumber evidence="1">7.1.2.2</ecNumber>
    </recommendedName>
    <alternativeName>
        <fullName evidence="1">ATP synthase F1 sector subunit alpha</fullName>
    </alternativeName>
    <alternativeName>
        <fullName evidence="1">F-ATPase subunit alpha</fullName>
    </alternativeName>
</protein>
<name>ATPA_BORBR</name>
<feature type="chain" id="PRO_0000238209" description="ATP synthase subunit alpha">
    <location>
        <begin position="1"/>
        <end position="513"/>
    </location>
</feature>
<feature type="binding site" evidence="1">
    <location>
        <begin position="169"/>
        <end position="176"/>
    </location>
    <ligand>
        <name>ATP</name>
        <dbReference type="ChEBI" id="CHEBI:30616"/>
    </ligand>
</feature>
<feature type="site" description="Required for activity" evidence="1">
    <location>
        <position position="373"/>
    </location>
</feature>
<sequence length="513" mass="55460">MQLNPSEISELLKSRIEGLGASTDVRTQGTVVSVTDGITRIHGLSDVMQGEMLEFPNNVFGVALNLERDSVGAVVLGDYTGVSEGDQVKTTGRILEVPVGPELKGRVVNTLGDAIDGKGPINTTQTDIIEKVAPGVIARRSVSQPLQTGIKAIDSMVPIGRGQRELIIGDRQTGKTAVAVDTIISQKGKGVTCVYVAIGQKASTINNVVRKLEEHGAMEYTIVVAAAASDSAAMQYLAAYAGCTMGEYFRDRGEDALIVYDDLTKQAWAYRQVSLLLRRPPGREAYPGDVFYLHSRLLERAARVNEEYVEKFTNGAVKGKTGSLTALPIIETQAGDVSAFVPTNVISITDGQIFLETDLFNAGVRPAINAGISVSRVGGAAQTKVIKKLSGGIRTDLAQYRELAAFAQFASDLDDATRRQLERGKRVVELLKQPQYQPLQVWELAVSLYAVNNGYLDDVDVAQILAFEKSLKDHLKAKHAALIQRIEDTKELSKDDEAELAAAVQDFKKHGAF</sequence>
<organism>
    <name type="scientific">Bordetella bronchiseptica (strain ATCC BAA-588 / NCTC 13252 / RB50)</name>
    <name type="common">Alcaligenes bronchisepticus</name>
    <dbReference type="NCBI Taxonomy" id="257310"/>
    <lineage>
        <taxon>Bacteria</taxon>
        <taxon>Pseudomonadati</taxon>
        <taxon>Pseudomonadota</taxon>
        <taxon>Betaproteobacteria</taxon>
        <taxon>Burkholderiales</taxon>
        <taxon>Alcaligenaceae</taxon>
        <taxon>Bordetella</taxon>
    </lineage>
</organism>
<dbReference type="EC" id="7.1.2.2" evidence="1"/>
<dbReference type="EMBL" id="BX640451">
    <property type="protein sequence ID" value="CAE34969.1"/>
    <property type="molecule type" value="Genomic_DNA"/>
</dbReference>
<dbReference type="RefSeq" id="WP_003815346.1">
    <property type="nucleotide sequence ID" value="NC_002927.3"/>
</dbReference>
<dbReference type="SMR" id="Q7WEM7"/>
<dbReference type="GeneID" id="93205933"/>
<dbReference type="KEGG" id="bbr:BB4607"/>
<dbReference type="eggNOG" id="COG0056">
    <property type="taxonomic scope" value="Bacteria"/>
</dbReference>
<dbReference type="HOGENOM" id="CLU_010091_2_1_4"/>
<dbReference type="Proteomes" id="UP000001027">
    <property type="component" value="Chromosome"/>
</dbReference>
<dbReference type="GO" id="GO:0005886">
    <property type="term" value="C:plasma membrane"/>
    <property type="evidence" value="ECO:0007669"/>
    <property type="project" value="UniProtKB-SubCell"/>
</dbReference>
<dbReference type="GO" id="GO:0045259">
    <property type="term" value="C:proton-transporting ATP synthase complex"/>
    <property type="evidence" value="ECO:0007669"/>
    <property type="project" value="UniProtKB-KW"/>
</dbReference>
<dbReference type="GO" id="GO:0043531">
    <property type="term" value="F:ADP binding"/>
    <property type="evidence" value="ECO:0007669"/>
    <property type="project" value="TreeGrafter"/>
</dbReference>
<dbReference type="GO" id="GO:0005524">
    <property type="term" value="F:ATP binding"/>
    <property type="evidence" value="ECO:0007669"/>
    <property type="project" value="UniProtKB-UniRule"/>
</dbReference>
<dbReference type="GO" id="GO:0046933">
    <property type="term" value="F:proton-transporting ATP synthase activity, rotational mechanism"/>
    <property type="evidence" value="ECO:0007669"/>
    <property type="project" value="UniProtKB-UniRule"/>
</dbReference>
<dbReference type="CDD" id="cd18113">
    <property type="entry name" value="ATP-synt_F1_alpha_C"/>
    <property type="match status" value="1"/>
</dbReference>
<dbReference type="CDD" id="cd18116">
    <property type="entry name" value="ATP-synt_F1_alpha_N"/>
    <property type="match status" value="1"/>
</dbReference>
<dbReference type="CDD" id="cd01132">
    <property type="entry name" value="F1-ATPase_alpha_CD"/>
    <property type="match status" value="1"/>
</dbReference>
<dbReference type="FunFam" id="1.20.150.20:FF:000001">
    <property type="entry name" value="ATP synthase subunit alpha"/>
    <property type="match status" value="1"/>
</dbReference>
<dbReference type="FunFam" id="2.40.30.20:FF:000001">
    <property type="entry name" value="ATP synthase subunit alpha"/>
    <property type="match status" value="1"/>
</dbReference>
<dbReference type="FunFam" id="3.40.50.300:FF:000002">
    <property type="entry name" value="ATP synthase subunit alpha"/>
    <property type="match status" value="1"/>
</dbReference>
<dbReference type="Gene3D" id="2.40.30.20">
    <property type="match status" value="1"/>
</dbReference>
<dbReference type="Gene3D" id="1.20.150.20">
    <property type="entry name" value="ATP synthase alpha/beta chain, C-terminal domain"/>
    <property type="match status" value="1"/>
</dbReference>
<dbReference type="Gene3D" id="3.40.50.300">
    <property type="entry name" value="P-loop containing nucleotide triphosphate hydrolases"/>
    <property type="match status" value="1"/>
</dbReference>
<dbReference type="HAMAP" id="MF_01346">
    <property type="entry name" value="ATP_synth_alpha_bact"/>
    <property type="match status" value="1"/>
</dbReference>
<dbReference type="InterPro" id="IPR023366">
    <property type="entry name" value="ATP_synth_asu-like_sf"/>
</dbReference>
<dbReference type="InterPro" id="IPR000793">
    <property type="entry name" value="ATP_synth_asu_C"/>
</dbReference>
<dbReference type="InterPro" id="IPR038376">
    <property type="entry name" value="ATP_synth_asu_C_sf"/>
</dbReference>
<dbReference type="InterPro" id="IPR033732">
    <property type="entry name" value="ATP_synth_F1_a_nt-bd_dom"/>
</dbReference>
<dbReference type="InterPro" id="IPR005294">
    <property type="entry name" value="ATP_synth_F1_asu"/>
</dbReference>
<dbReference type="InterPro" id="IPR020003">
    <property type="entry name" value="ATPase_a/bsu_AS"/>
</dbReference>
<dbReference type="InterPro" id="IPR004100">
    <property type="entry name" value="ATPase_F1/V1/A1_a/bsu_N"/>
</dbReference>
<dbReference type="InterPro" id="IPR036121">
    <property type="entry name" value="ATPase_F1/V1/A1_a/bsu_N_sf"/>
</dbReference>
<dbReference type="InterPro" id="IPR000194">
    <property type="entry name" value="ATPase_F1/V1/A1_a/bsu_nucl-bd"/>
</dbReference>
<dbReference type="InterPro" id="IPR027417">
    <property type="entry name" value="P-loop_NTPase"/>
</dbReference>
<dbReference type="NCBIfam" id="TIGR00962">
    <property type="entry name" value="atpA"/>
    <property type="match status" value="1"/>
</dbReference>
<dbReference type="NCBIfam" id="NF009884">
    <property type="entry name" value="PRK13343.1"/>
    <property type="match status" value="1"/>
</dbReference>
<dbReference type="PANTHER" id="PTHR48082">
    <property type="entry name" value="ATP SYNTHASE SUBUNIT ALPHA, MITOCHONDRIAL"/>
    <property type="match status" value="1"/>
</dbReference>
<dbReference type="PANTHER" id="PTHR48082:SF2">
    <property type="entry name" value="ATP SYNTHASE SUBUNIT ALPHA, MITOCHONDRIAL"/>
    <property type="match status" value="1"/>
</dbReference>
<dbReference type="Pfam" id="PF00006">
    <property type="entry name" value="ATP-synt_ab"/>
    <property type="match status" value="1"/>
</dbReference>
<dbReference type="Pfam" id="PF00306">
    <property type="entry name" value="ATP-synt_ab_C"/>
    <property type="match status" value="1"/>
</dbReference>
<dbReference type="Pfam" id="PF02874">
    <property type="entry name" value="ATP-synt_ab_N"/>
    <property type="match status" value="1"/>
</dbReference>
<dbReference type="PIRSF" id="PIRSF039088">
    <property type="entry name" value="F_ATPase_subunit_alpha"/>
    <property type="match status" value="1"/>
</dbReference>
<dbReference type="SUPFAM" id="SSF47917">
    <property type="entry name" value="C-terminal domain of alpha and beta subunits of F1 ATP synthase"/>
    <property type="match status" value="1"/>
</dbReference>
<dbReference type="SUPFAM" id="SSF50615">
    <property type="entry name" value="N-terminal domain of alpha and beta subunits of F1 ATP synthase"/>
    <property type="match status" value="1"/>
</dbReference>
<dbReference type="SUPFAM" id="SSF52540">
    <property type="entry name" value="P-loop containing nucleoside triphosphate hydrolases"/>
    <property type="match status" value="1"/>
</dbReference>
<dbReference type="PROSITE" id="PS00152">
    <property type="entry name" value="ATPASE_ALPHA_BETA"/>
    <property type="match status" value="1"/>
</dbReference>
<accession>Q7WEM7</accession>
<gene>
    <name evidence="1" type="primary">atpA</name>
    <name type="ordered locus">BB4607</name>
</gene>